<evidence type="ECO:0000250" key="1"/>
<evidence type="ECO:0000250" key="2">
    <source>
        <dbReference type="UniProtKB" id="P05165"/>
    </source>
</evidence>
<evidence type="ECO:0000250" key="3">
    <source>
        <dbReference type="UniProtKB" id="P0DTA4"/>
    </source>
</evidence>
<evidence type="ECO:0000250" key="4">
    <source>
        <dbReference type="UniProtKB" id="Q5LUF3"/>
    </source>
</evidence>
<evidence type="ECO:0000250" key="5">
    <source>
        <dbReference type="UniProtKB" id="Q91ZA3"/>
    </source>
</evidence>
<evidence type="ECO:0000255" key="6">
    <source>
        <dbReference type="PROSITE-ProRule" id="PRU00409"/>
    </source>
</evidence>
<evidence type="ECO:0000255" key="7">
    <source>
        <dbReference type="PROSITE-ProRule" id="PRU00969"/>
    </source>
</evidence>
<evidence type="ECO:0000255" key="8">
    <source>
        <dbReference type="PROSITE-ProRule" id="PRU01066"/>
    </source>
</evidence>
<evidence type="ECO:0000305" key="9">
    <source>
    </source>
</evidence>
<evidence type="ECO:0000312" key="10">
    <source>
        <dbReference type="RGD" id="3264"/>
    </source>
</evidence>
<evidence type="ECO:0007744" key="11">
    <source>
    </source>
</evidence>
<keyword id="KW-0007">Acetylation</keyword>
<keyword id="KW-0067">ATP-binding</keyword>
<keyword id="KW-0092">Biotin</keyword>
<keyword id="KW-0903">Direct protein sequencing</keyword>
<keyword id="KW-0436">Ligase</keyword>
<keyword id="KW-0442">Lipid degradation</keyword>
<keyword id="KW-0443">Lipid metabolism</keyword>
<keyword id="KW-0460">Magnesium</keyword>
<keyword id="KW-0464">Manganese</keyword>
<keyword id="KW-0479">Metal-binding</keyword>
<keyword id="KW-0496">Mitochondrion</keyword>
<keyword id="KW-0547">Nucleotide-binding</keyword>
<keyword id="KW-0597">Phosphoprotein</keyword>
<keyword id="KW-1185">Reference proteome</keyword>
<keyword id="KW-0809">Transit peptide</keyword>
<proteinExistence type="evidence at protein level"/>
<name>PCCA_RAT</name>
<sequence length="737" mass="81623">MAGLWVRTVALLAARRHWRRSSQQLLWTLKRAPRSSQQLLWTLKRAPVYSQQCLVVSRSLSSVEYEPKEKTFDKILIANRGEIACRVIKTCRKMGIRTVAIHSDVDASSVHVKMADEAVCVGPAPTSKSYLNMDAIMEAIKKTGAQAVHPGYGFLSENKEFAKCLAAEDVTFIGPDTHAIQAMGDKIESKLLAKRAKVNTIPGFDGVLKDADEAVRIAREIGYPVMIKASAGGGGKGMRIPWDDEETRDGFRFSSQEAASSFGDDRLLIEKFIDNPRHIEIQVLGDKHGNALWLNERECSIQRRNQKVVEEAPSIFLDPETRRAMGEQAVAWPKAVKYSSAGTVEFLVDSQKNFYFLEMNTRLQVEHPVTECITGLDLVQEMILVAKGYPLRHKQEDIPISGWAVECRVYAEDPYKSFGLPSIGRLSQYQEPIHLPGVRVDSGIQPGSDISIYHDPMISKLVTYGSDRAEALKRMEDALDSYVIRGVTHNIPLLREVIINTRFVKGDISTKFLSDVYPDGFKGHMLTPSERDQLLAIASSLFVASQLRAQRFQEHSRVPVIRPDVAKWELSVKLHDEDHTVVASNNGPTFNVEVDGSKLNVTSTWNLASPLLSVNVDGTQRTVQCLSPDAGGNMSIQFLGTVYKVHILTKLAAELNKFMLEKVPKDTSSVLRSPKPGVVVAVSVKPGDMVAEGQEICVIEAMKMQNSMTAGKMGKVKLVHCKAGDTVGEGDLLVELE</sequence>
<comment type="function">
    <text evidence="2 3 4">This is one of the 2 subunits of the biotin-dependent propionyl-CoA carboxylase (PCC), a mitochondrial enzyme involved in the catabolism of odd chain fatty acids, branched-chain amino acids isoleucine, threonine, methionine, and valine and other metabolites. Propionyl-CoA carboxylase catalyzes the carboxylation of propionyl-CoA/propanoyl-CoA to D-methylmalonyl-CoA/(S)-methylmalonyl-CoA (By similarity). Within the holoenzyme, the alpha subunit catalyzes the ATP-dependent carboxylation of the biotin carried by the biotin carboxyl carrier (BCC) domain, while the beta subunit then transfers the carboxyl group from carboxylated biotin to propionyl-CoA (By similarity). Propionyl-CoA carboxylase also significantly acts on butyryl-CoA/butanoyl-CoA, which is converted to ethylmalonyl-CoA/(2S)-ethylmalonyl-CoA (By similarity). Other alternative minor substrates include (2E)-butenoyl-CoA/crotonoyl-CoA (By similarity).</text>
</comment>
<comment type="catalytic activity">
    <reaction evidence="2">
        <text>propanoyl-CoA + hydrogencarbonate + ATP = (S)-methylmalonyl-CoA + ADP + phosphate + H(+)</text>
        <dbReference type="Rhea" id="RHEA:23720"/>
        <dbReference type="ChEBI" id="CHEBI:15378"/>
        <dbReference type="ChEBI" id="CHEBI:17544"/>
        <dbReference type="ChEBI" id="CHEBI:30616"/>
        <dbReference type="ChEBI" id="CHEBI:43474"/>
        <dbReference type="ChEBI" id="CHEBI:57327"/>
        <dbReference type="ChEBI" id="CHEBI:57392"/>
        <dbReference type="ChEBI" id="CHEBI:456216"/>
        <dbReference type="EC" id="6.4.1.3"/>
    </reaction>
    <physiologicalReaction direction="left-to-right" evidence="2">
        <dbReference type="Rhea" id="RHEA:23721"/>
    </physiologicalReaction>
</comment>
<comment type="catalytic activity">
    <reaction evidence="3">
        <text>butanoyl-CoA + hydrogencarbonate + ATP = (2S)-ethylmalonyl-CoA + ADP + phosphate + H(+)</text>
        <dbReference type="Rhea" id="RHEA:59520"/>
        <dbReference type="ChEBI" id="CHEBI:15378"/>
        <dbReference type="ChEBI" id="CHEBI:17544"/>
        <dbReference type="ChEBI" id="CHEBI:30616"/>
        <dbReference type="ChEBI" id="CHEBI:43474"/>
        <dbReference type="ChEBI" id="CHEBI:57371"/>
        <dbReference type="ChEBI" id="CHEBI:60909"/>
        <dbReference type="ChEBI" id="CHEBI:456216"/>
    </reaction>
    <physiologicalReaction direction="left-to-right" evidence="3">
        <dbReference type="Rhea" id="RHEA:59521"/>
    </physiologicalReaction>
</comment>
<comment type="cofactor">
    <cofactor evidence="8">
        <name>biotin</name>
        <dbReference type="ChEBI" id="CHEBI:57586"/>
    </cofactor>
</comment>
<comment type="cofactor">
    <cofactor evidence="6 7">
        <name>Mg(2+)</name>
        <dbReference type="ChEBI" id="CHEBI:18420"/>
    </cofactor>
    <cofactor evidence="6 7">
        <name>Mn(2+)</name>
        <dbReference type="ChEBI" id="CHEBI:29035"/>
    </cofactor>
    <text evidence="6 7">Binds 2 magnesium or manganese ions per subunit.</text>
</comment>
<comment type="pathway">
    <text evidence="2">Metabolic intermediate metabolism; propanoyl-CoA degradation; succinyl-CoA from propanoyl-CoA: step 1/3.</text>
</comment>
<comment type="subunit">
    <text evidence="2">The holoenzyme is a dodecamer composed of 6 PCCA/alpha subunits and 6 PCCB/beta subunits. Interacts (via the biotin carboxylation domain) with SIRT4. Interacts with SIRT3 and SIRT5.</text>
</comment>
<comment type="subcellular location">
    <subcellularLocation>
        <location evidence="2">Mitochondrion matrix</location>
    </subcellularLocation>
</comment>
<comment type="domain">
    <text evidence="4">Consists of an N-terminal biotin carboxylation/carboxylase (BC) domain that catalyzes the transient carboxylation of the biotin covalently attached to the C-terminal biotinyl-binding/biotin carboxyl carrier (BCC) domain.</text>
</comment>
<comment type="PTM">
    <text evidence="5">Acetylated.</text>
</comment>
<comment type="PTM">
    <text evidence="2">The biotin cofactor is covalently attached to the C-terminal biotinyl-binding domain and is required for the catalytic activity. Biotinylation is catalyzed by HLCS.</text>
</comment>
<comment type="disease">
    <text>Propionic acidemia due to recessively inherited deficiency of PCCase activity often causes life-threatening ketosis and acidosis.</text>
</comment>
<reference key="1">
    <citation type="journal article" date="2004" name="Genome Res.">
        <title>Identification of candidate disease genes by EST alignments, synteny, and expression and verification of Ensembl genes on rat chromosome 1q43-54.</title>
        <authorList>
            <person name="Vitt U."/>
            <person name="Gietzen D."/>
            <person name="Stevens K."/>
            <person name="Wingrove J."/>
            <person name="Becha S."/>
            <person name="Bulloch S."/>
            <person name="Burrill J."/>
            <person name="Chawla N."/>
            <person name="Chien J."/>
            <person name="Crawford M."/>
            <person name="Ison C."/>
            <person name="Kearney L."/>
            <person name="Kwong M."/>
            <person name="Park J."/>
            <person name="Policky J."/>
            <person name="Weiler M."/>
            <person name="White R."/>
            <person name="Xu Y."/>
            <person name="Daniels S."/>
            <person name="Jacob H."/>
            <person name="Jensen-Seaman M.I."/>
            <person name="Lazar J."/>
            <person name="Stuve L."/>
            <person name="Schmidt J."/>
        </authorList>
    </citation>
    <scope>NUCLEOTIDE SEQUENCE [MRNA] OF 1-33</scope>
    <source>
        <tissue>Uterus</tissue>
    </source>
</reference>
<reference key="2">
    <citation type="journal article" date="1989" name="J. Biol. Chem.">
        <title>Sequence analysis, biogenesis, and mitochondrial import of the alpha-subunit of rat liver propionyl-CoA carboxylase.</title>
        <authorList>
            <person name="Browner M.F."/>
            <person name="Taroni F."/>
            <person name="Sztul E."/>
            <person name="Rosenberg L.E."/>
        </authorList>
    </citation>
    <scope>NUCLEOTIDE SEQUENCE [MRNA] OF 34-737</scope>
</reference>
<reference key="3">
    <citation type="submission" date="1989-02" db="EMBL/GenBank/DDBJ databases">
        <authorList>
            <person name="Browner M.F."/>
            <person name="Taroni F."/>
            <person name="Sztul E."/>
            <person name="Rosenberg L.E."/>
        </authorList>
    </citation>
    <scope>SEQUENCE REVISION</scope>
</reference>
<reference key="4">
    <citation type="submission" date="2007-04" db="UniProtKB">
        <authorList>
            <person name="Lubec G."/>
            <person name="Diao W."/>
        </authorList>
    </citation>
    <scope>PROTEIN SEQUENCE OF 143-159; 353-387; 426-439; 475-485; 512-522 AND 532-548</scope>
    <scope>IDENTIFICATION BY MASS SPECTROMETRY</scope>
    <source>
        <strain>Sprague-Dawley</strain>
        <tissue>Hippocampus</tissue>
    </source>
</reference>
<reference key="5">
    <citation type="journal article" date="2012" name="Nat. Commun.">
        <title>Quantitative maps of protein phosphorylation sites across 14 different rat organs and tissues.</title>
        <authorList>
            <person name="Lundby A."/>
            <person name="Secher A."/>
            <person name="Lage K."/>
            <person name="Nordsborg N.B."/>
            <person name="Dmytriyev A."/>
            <person name="Lundby C."/>
            <person name="Olsen J.V."/>
        </authorList>
    </citation>
    <scope>PHOSPHORYLATION [LARGE SCALE ANALYSIS] AT SER-261</scope>
    <scope>IDENTIFICATION BY MASS SPECTROMETRY [LARGE SCALE ANALYSIS]</scope>
</reference>
<feature type="transit peptide" description="Mitochondrion" evidence="1">
    <location>
        <begin position="1"/>
        <end position="61"/>
    </location>
</feature>
<feature type="chain" id="PRO_0000002839" description="Propionyl-CoA carboxylase alpha chain, mitochondrial">
    <location>
        <begin position="62"/>
        <end position="737"/>
    </location>
</feature>
<feature type="domain" description="Biotin carboxylation" evidence="7">
    <location>
        <begin position="71"/>
        <end position="518"/>
    </location>
</feature>
<feature type="domain" description="ATP-grasp" evidence="6">
    <location>
        <begin position="190"/>
        <end position="387"/>
    </location>
</feature>
<feature type="domain" description="Biotinyl-binding" evidence="8">
    <location>
        <begin position="658"/>
        <end position="737"/>
    </location>
</feature>
<feature type="active site" evidence="1">
    <location>
        <position position="362"/>
    </location>
</feature>
<feature type="binding site" evidence="1">
    <location>
        <position position="186"/>
    </location>
    <ligand>
        <name>ATP</name>
        <dbReference type="ChEBI" id="CHEBI:30616"/>
    </ligand>
</feature>
<feature type="binding site" evidence="6">
    <location>
        <begin position="218"/>
        <end position="279"/>
    </location>
    <ligand>
        <name>ATP</name>
        <dbReference type="ChEBI" id="CHEBI:30616"/>
    </ligand>
</feature>
<feature type="binding site" evidence="1">
    <location>
        <position position="270"/>
    </location>
    <ligand>
        <name>ATP</name>
        <dbReference type="ChEBI" id="CHEBI:30616"/>
    </ligand>
</feature>
<feature type="binding site" evidence="1">
    <location>
        <position position="305"/>
    </location>
    <ligand>
        <name>ATP</name>
        <dbReference type="ChEBI" id="CHEBI:30616"/>
    </ligand>
</feature>
<feature type="binding site" evidence="6 7">
    <location>
        <position position="345"/>
    </location>
    <ligand>
        <name>Mg(2+)</name>
        <dbReference type="ChEBI" id="CHEBI:18420"/>
        <label>1</label>
    </ligand>
</feature>
<feature type="binding site" evidence="6 7">
    <location>
        <position position="345"/>
    </location>
    <ligand>
        <name>Mn(2+)</name>
        <dbReference type="ChEBI" id="CHEBI:29035"/>
        <label>1</label>
    </ligand>
</feature>
<feature type="binding site" evidence="6 7">
    <location>
        <position position="358"/>
    </location>
    <ligand>
        <name>Mg(2+)</name>
        <dbReference type="ChEBI" id="CHEBI:18420"/>
        <label>1</label>
    </ligand>
</feature>
<feature type="binding site" evidence="6 7">
    <location>
        <position position="358"/>
    </location>
    <ligand>
        <name>Mg(2+)</name>
        <dbReference type="ChEBI" id="CHEBI:18420"/>
        <label>2</label>
    </ligand>
</feature>
<feature type="binding site" evidence="6 7">
    <location>
        <position position="358"/>
    </location>
    <ligand>
        <name>Mn(2+)</name>
        <dbReference type="ChEBI" id="CHEBI:29035"/>
        <label>1</label>
    </ligand>
</feature>
<feature type="binding site" evidence="6 7">
    <location>
        <position position="358"/>
    </location>
    <ligand>
        <name>Mn(2+)</name>
        <dbReference type="ChEBI" id="CHEBI:29035"/>
        <label>2</label>
    </ligand>
</feature>
<feature type="binding site" evidence="6 7">
    <location>
        <position position="360"/>
    </location>
    <ligand>
        <name>Mg(2+)</name>
        <dbReference type="ChEBI" id="CHEBI:18420"/>
        <label>2</label>
    </ligand>
</feature>
<feature type="binding site" evidence="6 7">
    <location>
        <position position="360"/>
    </location>
    <ligand>
        <name>Mn(2+)</name>
        <dbReference type="ChEBI" id="CHEBI:29035"/>
        <label>2</label>
    </ligand>
</feature>
<feature type="binding site" evidence="4">
    <location>
        <position position="418"/>
    </location>
    <ligand>
        <name>biotin</name>
        <dbReference type="ChEBI" id="CHEBI:57586"/>
    </ligand>
</feature>
<feature type="modified residue" description="N6-acetyllysine; alternate" evidence="5">
    <location>
        <position position="74"/>
    </location>
</feature>
<feature type="modified residue" description="N6-succinyllysine; alternate" evidence="5">
    <location>
        <position position="74"/>
    </location>
</feature>
<feature type="modified residue" description="N6-succinyllysine" evidence="5">
    <location>
        <position position="128"/>
    </location>
</feature>
<feature type="modified residue" description="N6-acetyllysine; alternate" evidence="5">
    <location>
        <position position="159"/>
    </location>
</feature>
<feature type="modified residue" description="N6-succinyllysine; alternate" evidence="5">
    <location>
        <position position="159"/>
    </location>
</feature>
<feature type="modified residue" description="N6-acetyllysine" evidence="5">
    <location>
        <position position="163"/>
    </location>
</feature>
<feature type="modified residue" description="N6-succinyllysine" evidence="5">
    <location>
        <position position="197"/>
    </location>
</feature>
<feature type="modified residue" description="N6-acetyllysine; alternate" evidence="5">
    <location>
        <position position="209"/>
    </location>
</feature>
<feature type="modified residue" description="N6-succinyllysine; alternate" evidence="5">
    <location>
        <position position="209"/>
    </location>
</feature>
<feature type="modified residue" description="Phosphoserine" evidence="11">
    <location>
        <position position="261"/>
    </location>
</feature>
<feature type="modified residue" description="N6-succinyllysine" evidence="5">
    <location>
        <position position="271"/>
    </location>
</feature>
<feature type="modified residue" description="N6-acetyllysine; alternate" evidence="5">
    <location>
        <position position="337"/>
    </location>
</feature>
<feature type="modified residue" description="N6-succinyllysine; alternate" evidence="5">
    <location>
        <position position="337"/>
    </location>
</feature>
<feature type="modified residue" description="N6-succinyllysine" evidence="5">
    <location>
        <position position="394"/>
    </location>
</feature>
<feature type="modified residue" description="N6-succinyllysine" evidence="5">
    <location>
        <position position="416"/>
    </location>
</feature>
<feature type="modified residue" description="N6-acetyllysine" evidence="5">
    <location>
        <position position="505"/>
    </location>
</feature>
<feature type="modified residue" description="N6-succinyllysine" evidence="5">
    <location>
        <position position="511"/>
    </location>
</feature>
<feature type="modified residue" description="N6-succinyllysine" evidence="5">
    <location>
        <position position="522"/>
    </location>
</feature>
<feature type="modified residue" description="N6-succinyllysine" evidence="5">
    <location>
        <position position="567"/>
    </location>
</feature>
<feature type="modified residue" description="N6-succinyllysine" evidence="5">
    <location>
        <position position="657"/>
    </location>
</feature>
<feature type="modified residue" description="N6-biotinyllysine; by HLCS" evidence="2 8">
    <location>
        <position position="703"/>
    </location>
</feature>
<organism>
    <name type="scientific">Rattus norvegicus</name>
    <name type="common">Rat</name>
    <dbReference type="NCBI Taxonomy" id="10116"/>
    <lineage>
        <taxon>Eukaryota</taxon>
        <taxon>Metazoa</taxon>
        <taxon>Chordata</taxon>
        <taxon>Craniata</taxon>
        <taxon>Vertebrata</taxon>
        <taxon>Euteleostomi</taxon>
        <taxon>Mammalia</taxon>
        <taxon>Eutheria</taxon>
        <taxon>Euarchontoglires</taxon>
        <taxon>Glires</taxon>
        <taxon>Rodentia</taxon>
        <taxon>Myomorpha</taxon>
        <taxon>Muroidea</taxon>
        <taxon>Muridae</taxon>
        <taxon>Murinae</taxon>
        <taxon>Rattus</taxon>
    </lineage>
</organism>
<accession>P14882</accession>
<protein>
    <recommendedName>
        <fullName evidence="9">Propionyl-CoA carboxylase alpha chain, mitochondrial</fullName>
        <shortName>PCCase subunit alpha</shortName>
        <ecNumber evidence="2">6.4.1.3</ecNumber>
    </recommendedName>
    <alternativeName>
        <fullName>Propanoyl-CoA:carbon dioxide ligase subunit alpha</fullName>
    </alternativeName>
</protein>
<gene>
    <name evidence="10" type="primary">Pcca</name>
</gene>
<dbReference type="EC" id="6.4.1.3" evidence="2"/>
<dbReference type="EMBL" id="CK228512">
    <property type="status" value="NOT_ANNOTATED_CDS"/>
    <property type="molecule type" value="mRNA"/>
</dbReference>
<dbReference type="EMBL" id="M22631">
    <property type="protein sequence ID" value="AAA88512.1"/>
    <property type="status" value="ALT_SEQ"/>
    <property type="molecule type" value="mRNA"/>
</dbReference>
<dbReference type="PIR" id="A34337">
    <property type="entry name" value="A34337"/>
</dbReference>
<dbReference type="RefSeq" id="NP_062203.1">
    <property type="nucleotide sequence ID" value="NM_019330.1"/>
</dbReference>
<dbReference type="SMR" id="P14882"/>
<dbReference type="BioGRID" id="601858">
    <property type="interactions" value="2"/>
</dbReference>
<dbReference type="FunCoup" id="P14882">
    <property type="interactions" value="1664"/>
</dbReference>
<dbReference type="STRING" id="10116.ENSRNOP00000073510"/>
<dbReference type="GlyGen" id="P14882">
    <property type="glycosylation" value="3 sites, 1 O-linked glycan (3 sites)"/>
</dbReference>
<dbReference type="iPTMnet" id="P14882"/>
<dbReference type="PhosphoSitePlus" id="P14882"/>
<dbReference type="SwissPalm" id="P14882"/>
<dbReference type="jPOST" id="P14882"/>
<dbReference type="GeneID" id="687008"/>
<dbReference type="KEGG" id="rno:687008"/>
<dbReference type="AGR" id="RGD:3264"/>
<dbReference type="CTD" id="5095"/>
<dbReference type="RGD" id="3264">
    <property type="gene designation" value="Pcca"/>
</dbReference>
<dbReference type="eggNOG" id="KOG0238">
    <property type="taxonomic scope" value="Eukaryota"/>
</dbReference>
<dbReference type="InParanoid" id="P14882"/>
<dbReference type="PhylomeDB" id="P14882"/>
<dbReference type="BioCyc" id="MetaCyc:MONOMER-8606"/>
<dbReference type="BRENDA" id="6.4.1.3">
    <property type="organism ID" value="5301"/>
</dbReference>
<dbReference type="Reactome" id="R-RNO-196780">
    <property type="pathway name" value="Biotin transport and metabolism"/>
</dbReference>
<dbReference type="Reactome" id="R-RNO-71032">
    <property type="pathway name" value="Propionyl-CoA catabolism"/>
</dbReference>
<dbReference type="UniPathway" id="UPA00945">
    <property type="reaction ID" value="UER00908"/>
</dbReference>
<dbReference type="PRO" id="PR:P14882"/>
<dbReference type="Proteomes" id="UP000002494">
    <property type="component" value="Unplaced"/>
</dbReference>
<dbReference type="GO" id="GO:1902494">
    <property type="term" value="C:catalytic complex"/>
    <property type="evidence" value="ECO:0000266"/>
    <property type="project" value="RGD"/>
</dbReference>
<dbReference type="GO" id="GO:0005759">
    <property type="term" value="C:mitochondrial matrix"/>
    <property type="evidence" value="ECO:0000250"/>
    <property type="project" value="UniProtKB"/>
</dbReference>
<dbReference type="GO" id="GO:0005739">
    <property type="term" value="C:mitochondrion"/>
    <property type="evidence" value="ECO:0000318"/>
    <property type="project" value="GO_Central"/>
</dbReference>
<dbReference type="GO" id="GO:0005524">
    <property type="term" value="F:ATP binding"/>
    <property type="evidence" value="ECO:0007669"/>
    <property type="project" value="UniProtKB-KW"/>
</dbReference>
<dbReference type="GO" id="GO:0019899">
    <property type="term" value="F:enzyme binding"/>
    <property type="evidence" value="ECO:0000266"/>
    <property type="project" value="RGD"/>
</dbReference>
<dbReference type="GO" id="GO:0046872">
    <property type="term" value="F:metal ion binding"/>
    <property type="evidence" value="ECO:0007669"/>
    <property type="project" value="UniProtKB-KW"/>
</dbReference>
<dbReference type="GO" id="GO:0004658">
    <property type="term" value="F:propionyl-CoA carboxylase activity"/>
    <property type="evidence" value="ECO:0000250"/>
    <property type="project" value="UniProtKB"/>
</dbReference>
<dbReference type="GO" id="GO:0009063">
    <property type="term" value="P:amino acid catabolic process"/>
    <property type="evidence" value="ECO:0000304"/>
    <property type="project" value="RGD"/>
</dbReference>
<dbReference type="GO" id="GO:0009062">
    <property type="term" value="P:fatty acid catabolic process"/>
    <property type="evidence" value="ECO:0000304"/>
    <property type="project" value="RGD"/>
</dbReference>
<dbReference type="CDD" id="cd06850">
    <property type="entry name" value="biotinyl_domain"/>
    <property type="match status" value="1"/>
</dbReference>
<dbReference type="FunFam" id="3.30.1490.20:FF:000003">
    <property type="entry name" value="acetyl-CoA carboxylase isoform X1"/>
    <property type="match status" value="1"/>
</dbReference>
<dbReference type="FunFam" id="3.30.470.20:FF:000028">
    <property type="entry name" value="Methylcrotonoyl-CoA carboxylase subunit alpha, mitochondrial"/>
    <property type="match status" value="1"/>
</dbReference>
<dbReference type="FunFam" id="2.40.50.100:FF:000029">
    <property type="entry name" value="propionyl-CoA carboxylase alpha chain, mitochondrial"/>
    <property type="match status" value="1"/>
</dbReference>
<dbReference type="FunFam" id="3.40.50.20:FF:000010">
    <property type="entry name" value="Propionyl-CoA carboxylase subunit alpha"/>
    <property type="match status" value="1"/>
</dbReference>
<dbReference type="Gene3D" id="2.40.50.100">
    <property type="match status" value="1"/>
</dbReference>
<dbReference type="Gene3D" id="3.30.700.30">
    <property type="match status" value="1"/>
</dbReference>
<dbReference type="Gene3D" id="3.40.50.20">
    <property type="match status" value="1"/>
</dbReference>
<dbReference type="Gene3D" id="3.30.1490.20">
    <property type="entry name" value="ATP-grasp fold, A domain"/>
    <property type="match status" value="1"/>
</dbReference>
<dbReference type="Gene3D" id="3.30.470.20">
    <property type="entry name" value="ATP-grasp fold, B domain"/>
    <property type="match status" value="1"/>
</dbReference>
<dbReference type="InterPro" id="IPR011761">
    <property type="entry name" value="ATP-grasp"/>
</dbReference>
<dbReference type="InterPro" id="IPR013815">
    <property type="entry name" value="ATP_grasp_subdomain_1"/>
</dbReference>
<dbReference type="InterPro" id="IPR005481">
    <property type="entry name" value="BC-like_N"/>
</dbReference>
<dbReference type="InterPro" id="IPR001882">
    <property type="entry name" value="Biotin_BS"/>
</dbReference>
<dbReference type="InterPro" id="IPR050856">
    <property type="entry name" value="Biotin_carboxylase_complex"/>
</dbReference>
<dbReference type="InterPro" id="IPR011764">
    <property type="entry name" value="Biotin_carboxylation_dom"/>
</dbReference>
<dbReference type="InterPro" id="IPR005482">
    <property type="entry name" value="Biotin_COase_C"/>
</dbReference>
<dbReference type="InterPro" id="IPR000089">
    <property type="entry name" value="Biotin_lipoyl"/>
</dbReference>
<dbReference type="InterPro" id="IPR005479">
    <property type="entry name" value="CbamoylP_synth_lsu-like_ATP-bd"/>
</dbReference>
<dbReference type="InterPro" id="IPR041265">
    <property type="entry name" value="PCC_BT"/>
</dbReference>
<dbReference type="InterPro" id="IPR016185">
    <property type="entry name" value="PreATP-grasp_dom_sf"/>
</dbReference>
<dbReference type="InterPro" id="IPR011054">
    <property type="entry name" value="Rudment_hybrid_motif"/>
</dbReference>
<dbReference type="InterPro" id="IPR011053">
    <property type="entry name" value="Single_hybrid_motif"/>
</dbReference>
<dbReference type="NCBIfam" id="NF006367">
    <property type="entry name" value="PRK08591.1"/>
    <property type="match status" value="1"/>
</dbReference>
<dbReference type="PANTHER" id="PTHR18866">
    <property type="entry name" value="CARBOXYLASE:PYRUVATE/ACETYL-COA/PROPIONYL-COA CARBOXYLASE"/>
    <property type="match status" value="1"/>
</dbReference>
<dbReference type="PANTHER" id="PTHR18866:SF33">
    <property type="entry name" value="METHYLCROTONOYL-COA CARBOXYLASE SUBUNIT ALPHA, MITOCHONDRIAL-RELATED"/>
    <property type="match status" value="1"/>
</dbReference>
<dbReference type="Pfam" id="PF02785">
    <property type="entry name" value="Biotin_carb_C"/>
    <property type="match status" value="1"/>
</dbReference>
<dbReference type="Pfam" id="PF00289">
    <property type="entry name" value="Biotin_carb_N"/>
    <property type="match status" value="1"/>
</dbReference>
<dbReference type="Pfam" id="PF00364">
    <property type="entry name" value="Biotin_lipoyl"/>
    <property type="match status" value="1"/>
</dbReference>
<dbReference type="Pfam" id="PF02786">
    <property type="entry name" value="CPSase_L_D2"/>
    <property type="match status" value="1"/>
</dbReference>
<dbReference type="Pfam" id="PF18140">
    <property type="entry name" value="PCC_BT"/>
    <property type="match status" value="1"/>
</dbReference>
<dbReference type="SMART" id="SM00878">
    <property type="entry name" value="Biotin_carb_C"/>
    <property type="match status" value="1"/>
</dbReference>
<dbReference type="SUPFAM" id="SSF56059">
    <property type="entry name" value="Glutathione synthetase ATP-binding domain-like"/>
    <property type="match status" value="1"/>
</dbReference>
<dbReference type="SUPFAM" id="SSF52440">
    <property type="entry name" value="PreATP-grasp domain"/>
    <property type="match status" value="1"/>
</dbReference>
<dbReference type="SUPFAM" id="SSF51246">
    <property type="entry name" value="Rudiment single hybrid motif"/>
    <property type="match status" value="1"/>
</dbReference>
<dbReference type="SUPFAM" id="SSF51230">
    <property type="entry name" value="Single hybrid motif"/>
    <property type="match status" value="1"/>
</dbReference>
<dbReference type="PROSITE" id="PS50975">
    <property type="entry name" value="ATP_GRASP"/>
    <property type="match status" value="1"/>
</dbReference>
<dbReference type="PROSITE" id="PS50979">
    <property type="entry name" value="BC"/>
    <property type="match status" value="1"/>
</dbReference>
<dbReference type="PROSITE" id="PS00188">
    <property type="entry name" value="BIOTIN"/>
    <property type="match status" value="1"/>
</dbReference>
<dbReference type="PROSITE" id="PS50968">
    <property type="entry name" value="BIOTINYL_LIPOYL"/>
    <property type="match status" value="1"/>
</dbReference>
<dbReference type="PROSITE" id="PS00866">
    <property type="entry name" value="CPSASE_1"/>
    <property type="match status" value="1"/>
</dbReference>
<dbReference type="PROSITE" id="PS00867">
    <property type="entry name" value="CPSASE_2"/>
    <property type="match status" value="1"/>
</dbReference>